<proteinExistence type="inferred from homology"/>
<sequence length="316" mass="34950">MRKRARIIYNPTSGKELFKRVLPDALIKLEKAGYETSAYATEKIGDATFEAERALESEYDLLIAAGGDGTLNEVVNGIAEQPNRPKLGVIPMGTVNDFGRALHLPSDIMGAIDVIIDGHTTKVDIGKMNNRYFINLAAGGKLTQVSYETPSKLKSIVGPFAYYIKGFEMLPQMKAVDVRIEYDDNIFQGEALLFLLGLTNSMAGFEKLVPDAKLDDGYFTLIIVEKANLAELGHIMTLASRGEHTKHPKVIYAKAKSINISSFTDMQLNVDGEYGGKLPANFLNLEQHIEIFTPKDVFNEELLENDTITDITPDKQ</sequence>
<keyword id="KW-0067">ATP-binding</keyword>
<keyword id="KW-0418">Kinase</keyword>
<keyword id="KW-0444">Lipid biosynthesis</keyword>
<keyword id="KW-0443">Lipid metabolism</keyword>
<keyword id="KW-0460">Magnesium</keyword>
<keyword id="KW-0479">Metal-binding</keyword>
<keyword id="KW-0547">Nucleotide-binding</keyword>
<keyword id="KW-0594">Phospholipid biosynthesis</keyword>
<keyword id="KW-1208">Phospholipid metabolism</keyword>
<keyword id="KW-1185">Reference proteome</keyword>
<keyword id="KW-0808">Transferase</keyword>
<feature type="chain" id="PRO_0000386500" description="Diacylglycerol kinase">
    <location>
        <begin position="1"/>
        <end position="316"/>
    </location>
</feature>
<feature type="domain" description="DAGKc" evidence="2">
    <location>
        <begin position="1"/>
        <end position="132"/>
    </location>
</feature>
<feature type="active site" description="Proton acceptor" evidence="1">
    <location>
        <position position="273"/>
    </location>
</feature>
<feature type="binding site" evidence="2">
    <location>
        <begin position="10"/>
        <end position="14"/>
    </location>
    <ligand>
        <name>ATP</name>
        <dbReference type="ChEBI" id="CHEBI:30616"/>
    </ligand>
</feature>
<feature type="binding site" evidence="2">
    <location>
        <position position="41"/>
    </location>
    <ligand>
        <name>ATP</name>
        <dbReference type="ChEBI" id="CHEBI:30616"/>
    </ligand>
</feature>
<feature type="binding site" evidence="2">
    <location>
        <begin position="67"/>
        <end position="73"/>
    </location>
    <ligand>
        <name>ATP</name>
        <dbReference type="ChEBI" id="CHEBI:30616"/>
    </ligand>
</feature>
<feature type="binding site" evidence="2">
    <location>
        <position position="94"/>
    </location>
    <ligand>
        <name>ATP</name>
        <dbReference type="ChEBI" id="CHEBI:30616"/>
    </ligand>
</feature>
<feature type="binding site" evidence="1">
    <location>
        <position position="213"/>
    </location>
    <ligand>
        <name>Mg(2+)</name>
        <dbReference type="ChEBI" id="CHEBI:18420"/>
    </ligand>
</feature>
<feature type="binding site" evidence="1">
    <location>
        <position position="216"/>
    </location>
    <ligand>
        <name>Mg(2+)</name>
        <dbReference type="ChEBI" id="CHEBI:18420"/>
    </ligand>
</feature>
<feature type="binding site" evidence="1">
    <location>
        <position position="218"/>
    </location>
    <ligand>
        <name>Mg(2+)</name>
        <dbReference type="ChEBI" id="CHEBI:18420"/>
    </ligand>
</feature>
<evidence type="ECO:0000250" key="1">
    <source>
        <dbReference type="UniProtKB" id="Q6GFF9"/>
    </source>
</evidence>
<evidence type="ECO:0000255" key="2">
    <source>
        <dbReference type="PROSITE-ProRule" id="PRU00783"/>
    </source>
</evidence>
<evidence type="ECO:0000305" key="3"/>
<dbReference type="EC" id="2.7.1.107" evidence="1"/>
<dbReference type="EMBL" id="CP000029">
    <property type="protein sequence ID" value="AAW54816.1"/>
    <property type="molecule type" value="Genomic_DNA"/>
</dbReference>
<dbReference type="RefSeq" id="WP_002484891.1">
    <property type="nucleotide sequence ID" value="NC_002976.3"/>
</dbReference>
<dbReference type="SMR" id="Q5HN36"/>
<dbReference type="STRING" id="176279.SERP1436"/>
<dbReference type="KEGG" id="ser:SERP1436"/>
<dbReference type="eggNOG" id="COG1597">
    <property type="taxonomic scope" value="Bacteria"/>
</dbReference>
<dbReference type="HOGENOM" id="CLU_045532_1_0_9"/>
<dbReference type="Proteomes" id="UP000000531">
    <property type="component" value="Chromosome"/>
</dbReference>
<dbReference type="GO" id="GO:0005886">
    <property type="term" value="C:plasma membrane"/>
    <property type="evidence" value="ECO:0007669"/>
    <property type="project" value="TreeGrafter"/>
</dbReference>
<dbReference type="GO" id="GO:0005524">
    <property type="term" value="F:ATP binding"/>
    <property type="evidence" value="ECO:0007669"/>
    <property type="project" value="UniProtKB-KW"/>
</dbReference>
<dbReference type="GO" id="GO:0004143">
    <property type="term" value="F:ATP-dependent diacylglycerol kinase activity"/>
    <property type="evidence" value="ECO:0007669"/>
    <property type="project" value="UniProtKB-EC"/>
</dbReference>
<dbReference type="GO" id="GO:0046872">
    <property type="term" value="F:metal ion binding"/>
    <property type="evidence" value="ECO:0007669"/>
    <property type="project" value="UniProtKB-KW"/>
</dbReference>
<dbReference type="GO" id="GO:0008654">
    <property type="term" value="P:phospholipid biosynthetic process"/>
    <property type="evidence" value="ECO:0007669"/>
    <property type="project" value="UniProtKB-KW"/>
</dbReference>
<dbReference type="FunFam" id="2.60.200.40:FF:000015">
    <property type="entry name" value="Diacylglycerol kinase"/>
    <property type="match status" value="1"/>
</dbReference>
<dbReference type="FunFam" id="3.40.50.10330:FF:000008">
    <property type="entry name" value="Probable lipid kinase YegS"/>
    <property type="match status" value="1"/>
</dbReference>
<dbReference type="Gene3D" id="2.60.200.40">
    <property type="match status" value="1"/>
</dbReference>
<dbReference type="Gene3D" id="3.40.50.10330">
    <property type="entry name" value="Probable inorganic polyphosphate/atp-NAD kinase, domain 1"/>
    <property type="match status" value="1"/>
</dbReference>
<dbReference type="InterPro" id="IPR017438">
    <property type="entry name" value="ATP-NAD_kinase_N"/>
</dbReference>
<dbReference type="InterPro" id="IPR005218">
    <property type="entry name" value="Diacylglycerol/lipid_kinase"/>
</dbReference>
<dbReference type="InterPro" id="IPR001206">
    <property type="entry name" value="Diacylglycerol_kinase_cat_dom"/>
</dbReference>
<dbReference type="InterPro" id="IPR050187">
    <property type="entry name" value="Lipid_Phosphate_FormReg"/>
</dbReference>
<dbReference type="InterPro" id="IPR016064">
    <property type="entry name" value="NAD/diacylglycerol_kinase_sf"/>
</dbReference>
<dbReference type="InterPro" id="IPR045540">
    <property type="entry name" value="YegS/DAGK_C"/>
</dbReference>
<dbReference type="NCBIfam" id="NF009603">
    <property type="entry name" value="PRK13055.1"/>
    <property type="match status" value="1"/>
</dbReference>
<dbReference type="NCBIfam" id="NF009874">
    <property type="entry name" value="PRK13337.1"/>
    <property type="match status" value="1"/>
</dbReference>
<dbReference type="NCBIfam" id="TIGR00147">
    <property type="entry name" value="YegS/Rv2252/BmrU family lipid kinase"/>
    <property type="match status" value="1"/>
</dbReference>
<dbReference type="PANTHER" id="PTHR12358:SF106">
    <property type="entry name" value="LIPID KINASE YEGS"/>
    <property type="match status" value="1"/>
</dbReference>
<dbReference type="PANTHER" id="PTHR12358">
    <property type="entry name" value="SPHINGOSINE KINASE"/>
    <property type="match status" value="1"/>
</dbReference>
<dbReference type="Pfam" id="PF00781">
    <property type="entry name" value="DAGK_cat"/>
    <property type="match status" value="1"/>
</dbReference>
<dbReference type="Pfam" id="PF19279">
    <property type="entry name" value="YegS_C"/>
    <property type="match status" value="1"/>
</dbReference>
<dbReference type="SMART" id="SM00046">
    <property type="entry name" value="DAGKc"/>
    <property type="match status" value="1"/>
</dbReference>
<dbReference type="SUPFAM" id="SSF111331">
    <property type="entry name" value="NAD kinase/diacylglycerol kinase-like"/>
    <property type="match status" value="1"/>
</dbReference>
<dbReference type="PROSITE" id="PS50146">
    <property type="entry name" value="DAGK"/>
    <property type="match status" value="1"/>
</dbReference>
<gene>
    <name type="primary">dagK</name>
    <name type="ordered locus">SERP1436</name>
</gene>
<comment type="function">
    <text evidence="1">Catalyzes the phosphorylation of diacylglycerol (DAG) into phosphatidic acid. Is a key enzyme involved in the production of lipoteichoic acid by reintroducing DAG formed from the breakdown of membrane phospholipids into the phosphatidylglycerol biosynthetic pathway.</text>
</comment>
<comment type="catalytic activity">
    <reaction evidence="1">
        <text>a 1,2-diacyl-sn-glycerol + ATP = a 1,2-diacyl-sn-glycero-3-phosphate + ADP + H(+)</text>
        <dbReference type="Rhea" id="RHEA:10272"/>
        <dbReference type="ChEBI" id="CHEBI:15378"/>
        <dbReference type="ChEBI" id="CHEBI:17815"/>
        <dbReference type="ChEBI" id="CHEBI:30616"/>
        <dbReference type="ChEBI" id="CHEBI:58608"/>
        <dbReference type="ChEBI" id="CHEBI:456216"/>
        <dbReference type="EC" id="2.7.1.107"/>
    </reaction>
</comment>
<comment type="cofactor">
    <cofactor evidence="1">
        <name>Mg(2+)</name>
        <dbReference type="ChEBI" id="CHEBI:18420"/>
    </cofactor>
    <text evidence="1">Binds 1 Mg(2+) ion per subunit. This ion appears to have a structural role and is required for catalytic activity.</text>
</comment>
<comment type="subunit">
    <text evidence="1">Homodimer.</text>
</comment>
<comment type="similarity">
    <text evidence="3">Belongs to the diacylglycerol/lipid kinase family.</text>
</comment>
<accession>Q5HN36</accession>
<name>DAGK_STAEQ</name>
<organism>
    <name type="scientific">Staphylococcus epidermidis (strain ATCC 35984 / DSM 28319 / BCRC 17069 / CCUG 31568 / BM 3577 / RP62A)</name>
    <dbReference type="NCBI Taxonomy" id="176279"/>
    <lineage>
        <taxon>Bacteria</taxon>
        <taxon>Bacillati</taxon>
        <taxon>Bacillota</taxon>
        <taxon>Bacilli</taxon>
        <taxon>Bacillales</taxon>
        <taxon>Staphylococcaceae</taxon>
        <taxon>Staphylococcus</taxon>
    </lineage>
</organism>
<protein>
    <recommendedName>
        <fullName>Diacylglycerol kinase</fullName>
        <shortName>DAG kinase</shortName>
        <shortName>DAGK</shortName>
        <ecNumber evidence="1">2.7.1.107</ecNumber>
    </recommendedName>
</protein>
<reference key="1">
    <citation type="journal article" date="2005" name="J. Bacteriol.">
        <title>Insights on evolution of virulence and resistance from the complete genome analysis of an early methicillin-resistant Staphylococcus aureus strain and a biofilm-producing methicillin-resistant Staphylococcus epidermidis strain.</title>
        <authorList>
            <person name="Gill S.R."/>
            <person name="Fouts D.E."/>
            <person name="Archer G.L."/>
            <person name="Mongodin E.F."/>
            <person name="DeBoy R.T."/>
            <person name="Ravel J."/>
            <person name="Paulsen I.T."/>
            <person name="Kolonay J.F."/>
            <person name="Brinkac L.M."/>
            <person name="Beanan M.J."/>
            <person name="Dodson R.J."/>
            <person name="Daugherty S.C."/>
            <person name="Madupu R."/>
            <person name="Angiuoli S.V."/>
            <person name="Durkin A.S."/>
            <person name="Haft D.H."/>
            <person name="Vamathevan J.J."/>
            <person name="Khouri H."/>
            <person name="Utterback T.R."/>
            <person name="Lee C."/>
            <person name="Dimitrov G."/>
            <person name="Jiang L."/>
            <person name="Qin H."/>
            <person name="Weidman J."/>
            <person name="Tran K."/>
            <person name="Kang K.H."/>
            <person name="Hance I.R."/>
            <person name="Nelson K.E."/>
            <person name="Fraser C.M."/>
        </authorList>
    </citation>
    <scope>NUCLEOTIDE SEQUENCE [LARGE SCALE GENOMIC DNA]</scope>
    <source>
        <strain>ATCC 35984 / DSM 28319 / BCRC 17069 / CCUG 31568 / BM 3577 / RP62A</strain>
    </source>
</reference>